<gene>
    <name evidence="5" type="primary">RGP3</name>
    <name evidence="7" type="ordered locus">At3g08900</name>
    <name evidence="8" type="ORF">T16O11.16</name>
</gene>
<accession>O22666</accession>
<accession>Q8GWR6</accession>
<accession>Q9SR90</accession>
<protein>
    <recommendedName>
        <fullName evidence="6">UDP-arabinopyranose mutase 3</fullName>
        <ecNumber evidence="4">5.4.99.30</ecNumber>
    </recommendedName>
    <alternativeName>
        <fullName evidence="5">Reversibly glycosylated polypeptide 3</fullName>
        <shortName evidence="5">AtRGP3</shortName>
    </alternativeName>
    <alternativeName>
        <fullName evidence="6">UDP-L-arabinose mutase 3</fullName>
    </alternativeName>
</protein>
<comment type="function">
    <text evidence="4">UDP-L-arabinose mutase involved in the biosynthesis of cell wall non-cellulosic polysaccharides. Catalyzes the interconvertion of UDP-L-arabinopyranose (UDP-Arap) and UDP-L-arabinofuranose (UDP-Araf). Preferentially catalyzes the formation of UDP-Arap from UDP-Araf. At thermodynamic equilibrium in vitro the ratio of the pyranose form over the furanose form is 95:5. Is not active on other UDP-sugars (UDP-Gal, UDP-Xyl, UDP-Glc, GDP-Man and GDP-Fuc). Is probably active as heteromer in vivo.</text>
</comment>
<comment type="catalytic activity">
    <reaction evidence="4">
        <text>UDP-beta-L-arabinofuranose = UDP-beta-L-arabinopyranose</text>
        <dbReference type="Rhea" id="RHEA:28350"/>
        <dbReference type="ChEBI" id="CHEBI:61457"/>
        <dbReference type="ChEBI" id="CHEBI:61463"/>
        <dbReference type="EC" id="5.4.99.30"/>
    </reaction>
</comment>
<comment type="cofactor">
    <cofactor evidence="2">
        <name>Mn(2+)</name>
        <dbReference type="ChEBI" id="CHEBI:29035"/>
    </cofactor>
    <cofactor evidence="2">
        <name>Mg(2+)</name>
        <dbReference type="ChEBI" id="CHEBI:18420"/>
    </cofactor>
</comment>
<comment type="subunit">
    <text evidence="4">Heterodimer with RGP1.</text>
</comment>
<comment type="subcellular location">
    <subcellularLocation>
        <location evidence="4">Cytoplasm</location>
        <location evidence="4">Cytosol</location>
    </subcellularLocation>
    <subcellularLocation>
        <location evidence="4">Golgi apparatus</location>
    </subcellularLocation>
    <text>Soluble and membrane-associated.</text>
</comment>
<comment type="tissue specificity">
    <text evidence="4">Specifically expressed in developing seeds.</text>
</comment>
<comment type="domain">
    <text evidence="2">The conserved DXD motif is involved in enzyme activity.</text>
</comment>
<comment type="PTM">
    <text evidence="3">Reversibly glycosylated in vitro by UDP-glucose, UDP-xylose and UDP-galactose, but not UDP-mannose.</text>
</comment>
<comment type="similarity">
    <text evidence="6">Belongs to the RGP family.</text>
</comment>
<comment type="sequence caution" evidence="6">
    <conflict type="erroneous gene model prediction">
        <sequence resource="EMBL-CDS" id="AAF07834"/>
    </conflict>
</comment>
<comment type="sequence caution" evidence="6">
    <conflict type="erroneous initiation">
        <sequence resource="EMBL-CDS" id="BAC43271"/>
    </conflict>
    <text>Truncated N-terminus.</text>
</comment>
<reference key="1">
    <citation type="journal article" date="1998" name="Plant Physiol.">
        <title>Cloning and characterization of AtRGP1. A reversibly autoglycosylated arabidopsis protein implicated in cell wall biosynthesis.</title>
        <authorList>
            <person name="Delgado I.J."/>
            <person name="Wang Z."/>
            <person name="de Rocher A."/>
            <person name="Keegstra K."/>
            <person name="Raikhel N.V."/>
        </authorList>
    </citation>
    <scope>NUCLEOTIDE SEQUENCE [MRNA]</scope>
</reference>
<reference key="2">
    <citation type="journal article" date="2000" name="Nature">
        <title>Sequence and analysis of chromosome 3 of the plant Arabidopsis thaliana.</title>
        <authorList>
            <person name="Salanoubat M."/>
            <person name="Lemcke K."/>
            <person name="Rieger M."/>
            <person name="Ansorge W."/>
            <person name="Unseld M."/>
            <person name="Fartmann B."/>
            <person name="Valle G."/>
            <person name="Bloecker H."/>
            <person name="Perez-Alonso M."/>
            <person name="Obermaier B."/>
            <person name="Delseny M."/>
            <person name="Boutry M."/>
            <person name="Grivell L.A."/>
            <person name="Mache R."/>
            <person name="Puigdomenech P."/>
            <person name="De Simone V."/>
            <person name="Choisne N."/>
            <person name="Artiguenave F."/>
            <person name="Robert C."/>
            <person name="Brottier P."/>
            <person name="Wincker P."/>
            <person name="Cattolico L."/>
            <person name="Weissenbach J."/>
            <person name="Saurin W."/>
            <person name="Quetier F."/>
            <person name="Schaefer M."/>
            <person name="Mueller-Auer S."/>
            <person name="Gabel C."/>
            <person name="Fuchs M."/>
            <person name="Benes V."/>
            <person name="Wurmbach E."/>
            <person name="Drzonek H."/>
            <person name="Erfle H."/>
            <person name="Jordan N."/>
            <person name="Bangert S."/>
            <person name="Wiedelmann R."/>
            <person name="Kranz H."/>
            <person name="Voss H."/>
            <person name="Holland R."/>
            <person name="Brandt P."/>
            <person name="Nyakatura G."/>
            <person name="Vezzi A."/>
            <person name="D'Angelo M."/>
            <person name="Pallavicini A."/>
            <person name="Toppo S."/>
            <person name="Simionati B."/>
            <person name="Conrad A."/>
            <person name="Hornischer K."/>
            <person name="Kauer G."/>
            <person name="Loehnert T.-H."/>
            <person name="Nordsiek G."/>
            <person name="Reichelt J."/>
            <person name="Scharfe M."/>
            <person name="Schoen O."/>
            <person name="Bargues M."/>
            <person name="Terol J."/>
            <person name="Climent J."/>
            <person name="Navarro P."/>
            <person name="Collado C."/>
            <person name="Perez-Perez A."/>
            <person name="Ottenwaelder B."/>
            <person name="Duchemin D."/>
            <person name="Cooke R."/>
            <person name="Laudie M."/>
            <person name="Berger-Llauro C."/>
            <person name="Purnelle B."/>
            <person name="Masuy D."/>
            <person name="de Haan M."/>
            <person name="Maarse A.C."/>
            <person name="Alcaraz J.-P."/>
            <person name="Cottet A."/>
            <person name="Casacuberta E."/>
            <person name="Monfort A."/>
            <person name="Argiriou A."/>
            <person name="Flores M."/>
            <person name="Liguori R."/>
            <person name="Vitale D."/>
            <person name="Mannhaupt G."/>
            <person name="Haase D."/>
            <person name="Schoof H."/>
            <person name="Rudd S."/>
            <person name="Zaccaria P."/>
            <person name="Mewes H.-W."/>
            <person name="Mayer K.F.X."/>
            <person name="Kaul S."/>
            <person name="Town C.D."/>
            <person name="Koo H.L."/>
            <person name="Tallon L.J."/>
            <person name="Jenkins J."/>
            <person name="Rooney T."/>
            <person name="Rizzo M."/>
            <person name="Walts A."/>
            <person name="Utterback T."/>
            <person name="Fujii C.Y."/>
            <person name="Shea T.P."/>
            <person name="Creasy T.H."/>
            <person name="Haas B."/>
            <person name="Maiti R."/>
            <person name="Wu D."/>
            <person name="Peterson J."/>
            <person name="Van Aken S."/>
            <person name="Pai G."/>
            <person name="Militscher J."/>
            <person name="Sellers P."/>
            <person name="Gill J.E."/>
            <person name="Feldblyum T.V."/>
            <person name="Preuss D."/>
            <person name="Lin X."/>
            <person name="Nierman W.C."/>
            <person name="Salzberg S.L."/>
            <person name="White O."/>
            <person name="Venter J.C."/>
            <person name="Fraser C.M."/>
            <person name="Kaneko T."/>
            <person name="Nakamura Y."/>
            <person name="Sato S."/>
            <person name="Kato T."/>
            <person name="Asamizu E."/>
            <person name="Sasamoto S."/>
            <person name="Kimura T."/>
            <person name="Idesawa K."/>
            <person name="Kawashima K."/>
            <person name="Kishida Y."/>
            <person name="Kiyokawa C."/>
            <person name="Kohara M."/>
            <person name="Matsumoto M."/>
            <person name="Matsuno A."/>
            <person name="Muraki A."/>
            <person name="Nakayama S."/>
            <person name="Nakazaki N."/>
            <person name="Shinpo S."/>
            <person name="Takeuchi C."/>
            <person name="Wada T."/>
            <person name="Watanabe A."/>
            <person name="Yamada M."/>
            <person name="Yasuda M."/>
            <person name="Tabata S."/>
        </authorList>
    </citation>
    <scope>NUCLEOTIDE SEQUENCE [LARGE SCALE GENOMIC DNA]</scope>
    <source>
        <strain>cv. Columbia</strain>
    </source>
</reference>
<reference key="3">
    <citation type="journal article" date="2017" name="Plant J.">
        <title>Araport11: a complete reannotation of the Arabidopsis thaliana reference genome.</title>
        <authorList>
            <person name="Cheng C.Y."/>
            <person name="Krishnakumar V."/>
            <person name="Chan A.P."/>
            <person name="Thibaud-Nissen F."/>
            <person name="Schobel S."/>
            <person name="Town C.D."/>
        </authorList>
    </citation>
    <scope>GENOME REANNOTATION</scope>
    <source>
        <strain>cv. Columbia</strain>
    </source>
</reference>
<reference key="4">
    <citation type="journal article" date="2002" name="Science">
        <title>Functional annotation of a full-length Arabidopsis cDNA collection.</title>
        <authorList>
            <person name="Seki M."/>
            <person name="Narusaka M."/>
            <person name="Kamiya A."/>
            <person name="Ishida J."/>
            <person name="Satou M."/>
            <person name="Sakurai T."/>
            <person name="Nakajima M."/>
            <person name="Enju A."/>
            <person name="Akiyama K."/>
            <person name="Oono Y."/>
            <person name="Muramatsu M."/>
            <person name="Hayashizaki Y."/>
            <person name="Kawai J."/>
            <person name="Carninci P."/>
            <person name="Itoh M."/>
            <person name="Ishii Y."/>
            <person name="Arakawa T."/>
            <person name="Shibata K."/>
            <person name="Shinagawa A."/>
            <person name="Shinozaki K."/>
        </authorList>
    </citation>
    <scope>NUCLEOTIDE SEQUENCE [LARGE SCALE MRNA] OF 144-362</scope>
    <source>
        <strain>cv. Columbia</strain>
    </source>
</reference>
<reference key="5">
    <citation type="journal article" date="2011" name="Plant Cell">
        <title>The interconversion of UDP-L-arabinopyranose and UDP-L-arabinofuranose is indispensable for plant development in Arabidopsis.</title>
        <authorList>
            <person name="Rautengarten C."/>
            <person name="Ebert B."/>
            <person name="Herter T."/>
            <person name="Petzold C.J."/>
            <person name="Ishii T."/>
            <person name="Mukhopadhyay A."/>
            <person name="Usadel B."/>
            <person name="Scheller H.V."/>
        </authorList>
    </citation>
    <scope>FUNCTION</scope>
    <scope>CATALYTIC ACTIVITY</scope>
    <scope>SUBUNIT</scope>
    <scope>SUBCELLULAR LOCATION</scope>
    <scope>TISSUE SPECIFICITY</scope>
    <scope>IDENTIFICATION BY MASS SPECTROMETRY</scope>
</reference>
<keyword id="KW-0961">Cell wall biogenesis/degradation</keyword>
<keyword id="KW-0963">Cytoplasm</keyword>
<keyword id="KW-0325">Glycoprotein</keyword>
<keyword id="KW-0333">Golgi apparatus</keyword>
<keyword id="KW-0413">Isomerase</keyword>
<keyword id="KW-1185">Reference proteome</keyword>
<dbReference type="EC" id="5.4.99.30" evidence="4"/>
<dbReference type="EMBL" id="AF034255">
    <property type="protein sequence ID" value="AAC50002.2"/>
    <property type="molecule type" value="mRNA"/>
</dbReference>
<dbReference type="EMBL" id="AC010871">
    <property type="protein sequence ID" value="AAF07834.1"/>
    <property type="status" value="ALT_SEQ"/>
    <property type="molecule type" value="Genomic_DNA"/>
</dbReference>
<dbReference type="EMBL" id="CP002686">
    <property type="protein sequence ID" value="AEE74693.1"/>
    <property type="molecule type" value="Genomic_DNA"/>
</dbReference>
<dbReference type="EMBL" id="AK118676">
    <property type="protein sequence ID" value="BAC43271.1"/>
    <property type="status" value="ALT_INIT"/>
    <property type="molecule type" value="mRNA"/>
</dbReference>
<dbReference type="RefSeq" id="NP_187502.2">
    <property type="nucleotide sequence ID" value="NM_111724.3"/>
</dbReference>
<dbReference type="SMR" id="O22666"/>
<dbReference type="BioGRID" id="5373">
    <property type="interactions" value="1"/>
</dbReference>
<dbReference type="FunCoup" id="O22666">
    <property type="interactions" value="195"/>
</dbReference>
<dbReference type="STRING" id="3702.O22666"/>
<dbReference type="CAZy" id="GT75">
    <property type="family name" value="Glycosyltransferase Family 75"/>
</dbReference>
<dbReference type="GlyCosmos" id="O22666">
    <property type="glycosylation" value="1 site, No reported glycans"/>
</dbReference>
<dbReference type="GlyGen" id="O22666">
    <property type="glycosylation" value="1 site"/>
</dbReference>
<dbReference type="PaxDb" id="3702-AT3G08900.1"/>
<dbReference type="ProteomicsDB" id="236854"/>
<dbReference type="EnsemblPlants" id="AT3G08900.1">
    <property type="protein sequence ID" value="AT3G08900.1"/>
    <property type="gene ID" value="AT3G08900"/>
</dbReference>
<dbReference type="GeneID" id="820039"/>
<dbReference type="Gramene" id="AT3G08900.1">
    <property type="protein sequence ID" value="AT3G08900.1"/>
    <property type="gene ID" value="AT3G08900"/>
</dbReference>
<dbReference type="KEGG" id="ath:AT3G08900"/>
<dbReference type="Araport" id="AT3G08900"/>
<dbReference type="TAIR" id="AT3G08900">
    <property type="gene designation" value="RGP3"/>
</dbReference>
<dbReference type="eggNOG" id="ENOG502QSDP">
    <property type="taxonomic scope" value="Eukaryota"/>
</dbReference>
<dbReference type="HOGENOM" id="CLU_061976_0_0_1"/>
<dbReference type="InParanoid" id="O22666"/>
<dbReference type="OMA" id="MWRAFFE"/>
<dbReference type="PhylomeDB" id="O22666"/>
<dbReference type="BioCyc" id="ARA:AT3G08900-MONOMER"/>
<dbReference type="BRENDA" id="5.4.99.30">
    <property type="organism ID" value="399"/>
</dbReference>
<dbReference type="PRO" id="PR:O22666"/>
<dbReference type="Proteomes" id="UP000006548">
    <property type="component" value="Chromosome 3"/>
</dbReference>
<dbReference type="ExpressionAtlas" id="O22666">
    <property type="expression patterns" value="baseline and differential"/>
</dbReference>
<dbReference type="GO" id="GO:0005829">
    <property type="term" value="C:cytosol"/>
    <property type="evidence" value="ECO:0000314"/>
    <property type="project" value="UniProtKB"/>
</dbReference>
<dbReference type="GO" id="GO:0005794">
    <property type="term" value="C:Golgi apparatus"/>
    <property type="evidence" value="ECO:0000314"/>
    <property type="project" value="UniProtKB"/>
</dbReference>
<dbReference type="GO" id="GO:0016020">
    <property type="term" value="C:membrane"/>
    <property type="evidence" value="ECO:0000250"/>
    <property type="project" value="TAIR"/>
</dbReference>
<dbReference type="GO" id="GO:0009506">
    <property type="term" value="C:plasmodesma"/>
    <property type="evidence" value="ECO:0007005"/>
    <property type="project" value="TAIR"/>
</dbReference>
<dbReference type="GO" id="GO:0016866">
    <property type="term" value="F:intramolecular transferase activity"/>
    <property type="evidence" value="ECO:0000314"/>
    <property type="project" value="UniProtKB"/>
</dbReference>
<dbReference type="GO" id="GO:0052691">
    <property type="term" value="F:UDP-arabinopyranose mutase activity"/>
    <property type="evidence" value="ECO:0000314"/>
    <property type="project" value="TAIR"/>
</dbReference>
<dbReference type="GO" id="GO:0071555">
    <property type="term" value="P:cell wall organization"/>
    <property type="evidence" value="ECO:0007669"/>
    <property type="project" value="UniProtKB-KW"/>
</dbReference>
<dbReference type="GO" id="GO:0071669">
    <property type="term" value="P:plant-type cell wall organization or biogenesis"/>
    <property type="evidence" value="ECO:0007669"/>
    <property type="project" value="InterPro"/>
</dbReference>
<dbReference type="GO" id="GO:0033356">
    <property type="term" value="P:UDP-L-arabinose metabolic process"/>
    <property type="evidence" value="ECO:0000314"/>
    <property type="project" value="TAIR"/>
</dbReference>
<dbReference type="InterPro" id="IPR029044">
    <property type="entry name" value="Nucleotide-diphossugar_trans"/>
</dbReference>
<dbReference type="InterPro" id="IPR004901">
    <property type="entry name" value="RGP"/>
</dbReference>
<dbReference type="InterPro" id="IPR037595">
    <property type="entry name" value="RGP_fam"/>
</dbReference>
<dbReference type="PANTHER" id="PTHR31682:SF48">
    <property type="entry name" value="UDP-ARABINOPYRANOSE MUTASE 3"/>
    <property type="match status" value="1"/>
</dbReference>
<dbReference type="PANTHER" id="PTHR31682">
    <property type="entry name" value="UDP-ARABINOSE MUTASE"/>
    <property type="match status" value="1"/>
</dbReference>
<dbReference type="Pfam" id="PF03214">
    <property type="entry name" value="RGP"/>
    <property type="match status" value="1"/>
</dbReference>
<dbReference type="PIRSF" id="PIRSF016429">
    <property type="entry name" value="UPTG"/>
    <property type="match status" value="1"/>
</dbReference>
<dbReference type="SUPFAM" id="SSF53448">
    <property type="entry name" value="Nucleotide-diphospho-sugar transferases"/>
    <property type="match status" value="1"/>
</dbReference>
<proteinExistence type="evidence at protein level"/>
<name>RGP3_ARATH</name>
<feature type="chain" id="PRO_0000410986" description="UDP-arabinopyranose mutase 3">
    <location>
        <begin position="1"/>
        <end position="362"/>
    </location>
</feature>
<feature type="short sequence motif" description="DXD motif" evidence="2">
    <location>
        <begin position="106"/>
        <end position="108"/>
    </location>
</feature>
<feature type="site" description="Required for activity" evidence="2">
    <location>
        <position position="154"/>
    </location>
</feature>
<feature type="site" description="Required for activity" evidence="2">
    <location>
        <position position="161"/>
    </location>
</feature>
<feature type="glycosylation site" description="N-linked (Glc...) arginine" evidence="1">
    <location>
        <position position="154"/>
    </location>
</feature>
<sequence>MAQLYSSVKPTPMLKDELDIVIPTIRNLDFLEMWRPFFEQYHLIIVQDGDPSKVINIPVGFDYELYNRNDINRILGPKASCISFKDSACRCFGYMVSKKKYIYTIDDDCFVAKDPTGKEINALEQHIKNLLSPSTPHFFNTLYDPYRDGADFVRGYPFSMREGAITAVSHGLWLNIPDYDAPTQLVKPLEKNSRYVDAVMTIPKGTLFPMCGMNLAFDRELIGPAMYFGLMGDGQPIGRYDDMWAGWCVKVICDHMGWGVKTGLPYIWHSKASNPFVNLKKEYNGIFWQEEAIPFFQSVTLPKECTSVQQCYLELAKLVREKLGKVDPYFITLATGMVTWIEAWEELNSAEGTEAEAPKGKN</sequence>
<organism>
    <name type="scientific">Arabidopsis thaliana</name>
    <name type="common">Mouse-ear cress</name>
    <dbReference type="NCBI Taxonomy" id="3702"/>
    <lineage>
        <taxon>Eukaryota</taxon>
        <taxon>Viridiplantae</taxon>
        <taxon>Streptophyta</taxon>
        <taxon>Embryophyta</taxon>
        <taxon>Tracheophyta</taxon>
        <taxon>Spermatophyta</taxon>
        <taxon>Magnoliopsida</taxon>
        <taxon>eudicotyledons</taxon>
        <taxon>Gunneridae</taxon>
        <taxon>Pentapetalae</taxon>
        <taxon>rosids</taxon>
        <taxon>malvids</taxon>
        <taxon>Brassicales</taxon>
        <taxon>Brassicaceae</taxon>
        <taxon>Camelineae</taxon>
        <taxon>Arabidopsis</taxon>
    </lineage>
</organism>
<evidence type="ECO:0000250" key="1">
    <source>
        <dbReference type="UniProtKB" id="P80607"/>
    </source>
</evidence>
<evidence type="ECO:0000250" key="2">
    <source>
        <dbReference type="UniProtKB" id="Q8H8T0"/>
    </source>
</evidence>
<evidence type="ECO:0000250" key="3">
    <source>
        <dbReference type="UniProtKB" id="Q9SRT9"/>
    </source>
</evidence>
<evidence type="ECO:0000269" key="4">
    <source>
    </source>
</evidence>
<evidence type="ECO:0000303" key="5">
    <source>
    </source>
</evidence>
<evidence type="ECO:0000305" key="6"/>
<evidence type="ECO:0000312" key="7">
    <source>
        <dbReference type="Araport" id="AT3G08900"/>
    </source>
</evidence>
<evidence type="ECO:0000312" key="8">
    <source>
        <dbReference type="EMBL" id="AAF07834.1"/>
    </source>
</evidence>